<organism>
    <name type="scientific">Arabidopsis thaliana</name>
    <name type="common">Mouse-ear cress</name>
    <dbReference type="NCBI Taxonomy" id="3702"/>
    <lineage>
        <taxon>Eukaryota</taxon>
        <taxon>Viridiplantae</taxon>
        <taxon>Streptophyta</taxon>
        <taxon>Embryophyta</taxon>
        <taxon>Tracheophyta</taxon>
        <taxon>Spermatophyta</taxon>
        <taxon>Magnoliopsida</taxon>
        <taxon>eudicotyledons</taxon>
        <taxon>Gunneridae</taxon>
        <taxon>Pentapetalae</taxon>
        <taxon>rosids</taxon>
        <taxon>malvids</taxon>
        <taxon>Brassicales</taxon>
        <taxon>Brassicaceae</taxon>
        <taxon>Camelineae</taxon>
        <taxon>Arabidopsis</taxon>
    </lineage>
</organism>
<comment type="function">
    <text evidence="4 5">Mechanosensitive channel that opens in response to stretch forces in the membrane lipid bilayer.</text>
</comment>
<comment type="subcellular location">
    <subcellularLocation>
        <location evidence="4">Cell membrane</location>
        <topology evidence="4">Multi-pass membrane protein</topology>
    </subcellularLocation>
</comment>
<comment type="tissue specificity">
    <text evidence="4">Detected in the root tip and throughout the vasculature of the root and leaf.</text>
</comment>
<comment type="similarity">
    <text evidence="6">Belongs to the MscS (TC 1.A.23) family.</text>
</comment>
<evidence type="ECO:0000250" key="1">
    <source>
        <dbReference type="UniProtKB" id="Q84M97"/>
    </source>
</evidence>
<evidence type="ECO:0000255" key="2"/>
<evidence type="ECO:0000256" key="3">
    <source>
        <dbReference type="SAM" id="MobiDB-lite"/>
    </source>
</evidence>
<evidence type="ECO:0000269" key="4">
    <source>
    </source>
</evidence>
<evidence type="ECO:0000269" key="5">
    <source>
    </source>
</evidence>
<evidence type="ECO:0000305" key="6"/>
<evidence type="ECO:0007744" key="7">
    <source>
    </source>
</evidence>
<evidence type="ECO:0007744" key="8">
    <source>
    </source>
</evidence>
<evidence type="ECO:0007744" key="9">
    <source>
    </source>
</evidence>
<evidence type="ECO:0007829" key="10">
    <source>
        <dbReference type="PDB" id="8TDK"/>
    </source>
</evidence>
<proteinExistence type="evidence at protein level"/>
<accession>Q9LYG9</accession>
<accession>C0Z2U6</accession>
<dbReference type="EMBL" id="AB007727">
    <property type="protein sequence ID" value="BAB10026.1"/>
    <property type="molecule type" value="Genomic_DNA"/>
</dbReference>
<dbReference type="EMBL" id="AL163812">
    <property type="protein sequence ID" value="CAB87679.1"/>
    <property type="molecule type" value="Genomic_DNA"/>
</dbReference>
<dbReference type="EMBL" id="CP002688">
    <property type="protein sequence ID" value="AED91759.1"/>
    <property type="molecule type" value="Genomic_DNA"/>
</dbReference>
<dbReference type="EMBL" id="CP002688">
    <property type="protein sequence ID" value="AED91760.1"/>
    <property type="molecule type" value="Genomic_DNA"/>
</dbReference>
<dbReference type="EMBL" id="CP002688">
    <property type="protein sequence ID" value="AED91761.1"/>
    <property type="molecule type" value="Genomic_DNA"/>
</dbReference>
<dbReference type="EMBL" id="AY075640">
    <property type="protein sequence ID" value="AAL77649.1"/>
    <property type="molecule type" value="mRNA"/>
</dbReference>
<dbReference type="EMBL" id="BT002236">
    <property type="protein sequence ID" value="AAN72247.1"/>
    <property type="molecule type" value="mRNA"/>
</dbReference>
<dbReference type="EMBL" id="AK318910">
    <property type="protein sequence ID" value="BAH57025.1"/>
    <property type="molecule type" value="mRNA"/>
</dbReference>
<dbReference type="PIR" id="T48565">
    <property type="entry name" value="T48565"/>
</dbReference>
<dbReference type="RefSeq" id="NP_001119212.1">
    <property type="nucleotide sequence ID" value="NM_001125740.2"/>
</dbReference>
<dbReference type="RefSeq" id="NP_196769.1">
    <property type="nucleotide sequence ID" value="NM_121246.5"/>
</dbReference>
<dbReference type="RefSeq" id="NP_850810.1">
    <property type="nucleotide sequence ID" value="NM_180479.2"/>
</dbReference>
<dbReference type="PDB" id="8JWE">
    <property type="method" value="EM"/>
    <property type="resolution" value="2.74 A"/>
    <property type="chains" value="A/B/C/D/E/F/G=1-734"/>
</dbReference>
<dbReference type="PDB" id="8TDJ">
    <property type="method" value="EM"/>
    <property type="resolution" value="3.70 A"/>
    <property type="chains" value="A/B/C/D/E/F/G=1-734"/>
</dbReference>
<dbReference type="PDB" id="8TDK">
    <property type="method" value="EM"/>
    <property type="resolution" value="3.50 A"/>
    <property type="chains" value="A/B/C/D/E/F/G=1-734"/>
</dbReference>
<dbReference type="PDB" id="8TDL">
    <property type="method" value="EM"/>
    <property type="resolution" value="3.60 A"/>
    <property type="chains" value="A/B/C/D/E/F/G=1-734"/>
</dbReference>
<dbReference type="PDB" id="8TDM">
    <property type="method" value="EM"/>
    <property type="resolution" value="3.70 A"/>
    <property type="chains" value="A/B/C/D/E/F/G=1-734"/>
</dbReference>
<dbReference type="PDBsum" id="8JWE"/>
<dbReference type="PDBsum" id="8TDJ"/>
<dbReference type="PDBsum" id="8TDK"/>
<dbReference type="PDBsum" id="8TDL"/>
<dbReference type="PDBsum" id="8TDM"/>
<dbReference type="EMDB" id="EMD-36680"/>
<dbReference type="EMDB" id="EMD-41164"/>
<dbReference type="EMDB" id="EMD-41165"/>
<dbReference type="EMDB" id="EMD-41166"/>
<dbReference type="EMDB" id="EMD-41168"/>
<dbReference type="SMR" id="Q9LYG9"/>
<dbReference type="BioGRID" id="16359">
    <property type="interactions" value="1"/>
</dbReference>
<dbReference type="FunCoup" id="Q9LYG9">
    <property type="interactions" value="444"/>
</dbReference>
<dbReference type="IntAct" id="Q9LYG9">
    <property type="interactions" value="1"/>
</dbReference>
<dbReference type="STRING" id="3702.Q9LYG9"/>
<dbReference type="TCDB" id="1.A.23.4.14">
    <property type="family name" value="the small conductance mechanosensitive ion channel (mscs) family"/>
</dbReference>
<dbReference type="GlyGen" id="Q9LYG9">
    <property type="glycosylation" value="1 site"/>
</dbReference>
<dbReference type="iPTMnet" id="Q9LYG9"/>
<dbReference type="PaxDb" id="3702-AT5G12080.2"/>
<dbReference type="ProteomicsDB" id="250955"/>
<dbReference type="EnsemblPlants" id="AT5G12080.1">
    <property type="protein sequence ID" value="AT5G12080.1"/>
    <property type="gene ID" value="AT5G12080"/>
</dbReference>
<dbReference type="EnsemblPlants" id="AT5G12080.2">
    <property type="protein sequence ID" value="AT5G12080.2"/>
    <property type="gene ID" value="AT5G12080"/>
</dbReference>
<dbReference type="EnsemblPlants" id="AT5G12080.3">
    <property type="protein sequence ID" value="AT5G12080.3"/>
    <property type="gene ID" value="AT5G12080"/>
</dbReference>
<dbReference type="GeneID" id="831081"/>
<dbReference type="Gramene" id="AT5G12080.1">
    <property type="protein sequence ID" value="AT5G12080.1"/>
    <property type="gene ID" value="AT5G12080"/>
</dbReference>
<dbReference type="Gramene" id="AT5G12080.2">
    <property type="protein sequence ID" value="AT5G12080.2"/>
    <property type="gene ID" value="AT5G12080"/>
</dbReference>
<dbReference type="Gramene" id="AT5G12080.3">
    <property type="protein sequence ID" value="AT5G12080.3"/>
    <property type="gene ID" value="AT5G12080"/>
</dbReference>
<dbReference type="KEGG" id="ath:AT5G12080"/>
<dbReference type="Araport" id="AT5G12080"/>
<dbReference type="TAIR" id="AT5G12080">
    <property type="gene designation" value="MSL10"/>
</dbReference>
<dbReference type="eggNOG" id="KOG4629">
    <property type="taxonomic scope" value="Eukaryota"/>
</dbReference>
<dbReference type="HOGENOM" id="CLU_013552_1_0_1"/>
<dbReference type="InParanoid" id="Q9LYG9"/>
<dbReference type="OMA" id="YNTPLET"/>
<dbReference type="PhylomeDB" id="Q9LYG9"/>
<dbReference type="PRO" id="PR:Q9LYG9"/>
<dbReference type="Proteomes" id="UP000006548">
    <property type="component" value="Chromosome 5"/>
</dbReference>
<dbReference type="ExpressionAtlas" id="Q9LYG9">
    <property type="expression patterns" value="baseline and differential"/>
</dbReference>
<dbReference type="GO" id="GO:0005886">
    <property type="term" value="C:plasma membrane"/>
    <property type="evidence" value="ECO:0000314"/>
    <property type="project" value="TAIR"/>
</dbReference>
<dbReference type="GO" id="GO:0008381">
    <property type="term" value="F:mechanosensitive monoatomic ion channel activity"/>
    <property type="evidence" value="ECO:0000314"/>
    <property type="project" value="TAIR"/>
</dbReference>
<dbReference type="GO" id="GO:0050982">
    <property type="term" value="P:detection of mechanical stimulus"/>
    <property type="evidence" value="ECO:0000315"/>
    <property type="project" value="TAIR"/>
</dbReference>
<dbReference type="GO" id="GO:0010150">
    <property type="term" value="P:leaf senescence"/>
    <property type="evidence" value="ECO:0000315"/>
    <property type="project" value="TAIR"/>
</dbReference>
<dbReference type="GO" id="GO:0006820">
    <property type="term" value="P:monoatomic anion transport"/>
    <property type="evidence" value="ECO:0000314"/>
    <property type="project" value="TAIR"/>
</dbReference>
<dbReference type="GO" id="GO:0097468">
    <property type="term" value="P:programmed cell death in response to reactive oxygen species"/>
    <property type="evidence" value="ECO:0000315"/>
    <property type="project" value="TAIR"/>
</dbReference>
<dbReference type="FunFam" id="2.30.30.60:FF:000003">
    <property type="entry name" value="Predicted mechanosensitive ion channel"/>
    <property type="match status" value="1"/>
</dbReference>
<dbReference type="Gene3D" id="2.30.30.60">
    <property type="match status" value="1"/>
</dbReference>
<dbReference type="InterPro" id="IPR010920">
    <property type="entry name" value="LSM_dom_sf"/>
</dbReference>
<dbReference type="InterPro" id="IPR016688">
    <property type="entry name" value="MscS-like_plants/fungi"/>
</dbReference>
<dbReference type="InterPro" id="IPR023408">
    <property type="entry name" value="MscS_beta-dom_sf"/>
</dbReference>
<dbReference type="InterPro" id="IPR006685">
    <property type="entry name" value="MscS_channel_2nd"/>
</dbReference>
<dbReference type="PANTHER" id="PTHR31618:SF20">
    <property type="entry name" value="MECHANOSENSITIVE ION CHANNEL PROTEIN 10"/>
    <property type="match status" value="1"/>
</dbReference>
<dbReference type="PANTHER" id="PTHR31618">
    <property type="entry name" value="MECHANOSENSITIVE ION CHANNEL PROTEIN 5"/>
    <property type="match status" value="1"/>
</dbReference>
<dbReference type="Pfam" id="PF00924">
    <property type="entry name" value="MS_channel_2nd"/>
    <property type="match status" value="1"/>
</dbReference>
<dbReference type="PIRSF" id="PIRSF017209">
    <property type="entry name" value="Memb_At2g17000_prd"/>
    <property type="match status" value="1"/>
</dbReference>
<dbReference type="SUPFAM" id="SSF50182">
    <property type="entry name" value="Sm-like ribonucleoproteins"/>
    <property type="match status" value="1"/>
</dbReference>
<reference key="1">
    <citation type="journal article" date="1997" name="DNA Res.">
        <title>Structural analysis of Arabidopsis thaliana chromosome 5. III. Sequence features of the regions of 1,191,918 bp covered by seventeen physically assigned P1 clones.</title>
        <authorList>
            <person name="Nakamura Y."/>
            <person name="Sato S."/>
            <person name="Kaneko T."/>
            <person name="Kotani H."/>
            <person name="Asamizu E."/>
            <person name="Miyajima N."/>
            <person name="Tabata S."/>
        </authorList>
    </citation>
    <scope>NUCLEOTIDE SEQUENCE [LARGE SCALE GENOMIC DNA]</scope>
    <source>
        <strain>cv. Columbia</strain>
    </source>
</reference>
<reference key="2">
    <citation type="journal article" date="2000" name="Nature">
        <title>Sequence and analysis of chromosome 5 of the plant Arabidopsis thaliana.</title>
        <authorList>
            <person name="Tabata S."/>
            <person name="Kaneko T."/>
            <person name="Nakamura Y."/>
            <person name="Kotani H."/>
            <person name="Kato T."/>
            <person name="Asamizu E."/>
            <person name="Miyajima N."/>
            <person name="Sasamoto S."/>
            <person name="Kimura T."/>
            <person name="Hosouchi T."/>
            <person name="Kawashima K."/>
            <person name="Kohara M."/>
            <person name="Matsumoto M."/>
            <person name="Matsuno A."/>
            <person name="Muraki A."/>
            <person name="Nakayama S."/>
            <person name="Nakazaki N."/>
            <person name="Naruo K."/>
            <person name="Okumura S."/>
            <person name="Shinpo S."/>
            <person name="Takeuchi C."/>
            <person name="Wada T."/>
            <person name="Watanabe A."/>
            <person name="Yamada M."/>
            <person name="Yasuda M."/>
            <person name="Sato S."/>
            <person name="de la Bastide M."/>
            <person name="Huang E."/>
            <person name="Spiegel L."/>
            <person name="Gnoj L."/>
            <person name="O'Shaughnessy A."/>
            <person name="Preston R."/>
            <person name="Habermann K."/>
            <person name="Murray J."/>
            <person name="Johnson D."/>
            <person name="Rohlfing T."/>
            <person name="Nelson J."/>
            <person name="Stoneking T."/>
            <person name="Pepin K."/>
            <person name="Spieth J."/>
            <person name="Sekhon M."/>
            <person name="Armstrong J."/>
            <person name="Becker M."/>
            <person name="Belter E."/>
            <person name="Cordum H."/>
            <person name="Cordes M."/>
            <person name="Courtney L."/>
            <person name="Courtney W."/>
            <person name="Dante M."/>
            <person name="Du H."/>
            <person name="Edwards J."/>
            <person name="Fryman J."/>
            <person name="Haakensen B."/>
            <person name="Lamar E."/>
            <person name="Latreille P."/>
            <person name="Leonard S."/>
            <person name="Meyer R."/>
            <person name="Mulvaney E."/>
            <person name="Ozersky P."/>
            <person name="Riley A."/>
            <person name="Strowmatt C."/>
            <person name="Wagner-McPherson C."/>
            <person name="Wollam A."/>
            <person name="Yoakum M."/>
            <person name="Bell M."/>
            <person name="Dedhia N."/>
            <person name="Parnell L."/>
            <person name="Shah R."/>
            <person name="Rodriguez M."/>
            <person name="Hoon See L."/>
            <person name="Vil D."/>
            <person name="Baker J."/>
            <person name="Kirchoff K."/>
            <person name="Toth K."/>
            <person name="King L."/>
            <person name="Bahret A."/>
            <person name="Miller B."/>
            <person name="Marra M.A."/>
            <person name="Martienssen R."/>
            <person name="McCombie W.R."/>
            <person name="Wilson R.K."/>
            <person name="Murphy G."/>
            <person name="Bancroft I."/>
            <person name="Volckaert G."/>
            <person name="Wambutt R."/>
            <person name="Duesterhoeft A."/>
            <person name="Stiekema W."/>
            <person name="Pohl T."/>
            <person name="Entian K.-D."/>
            <person name="Terryn N."/>
            <person name="Hartley N."/>
            <person name="Bent E."/>
            <person name="Johnson S."/>
            <person name="Langham S.-A."/>
            <person name="McCullagh B."/>
            <person name="Robben J."/>
            <person name="Grymonprez B."/>
            <person name="Zimmermann W."/>
            <person name="Ramsperger U."/>
            <person name="Wedler H."/>
            <person name="Balke K."/>
            <person name="Wedler E."/>
            <person name="Peters S."/>
            <person name="van Staveren M."/>
            <person name="Dirkse W."/>
            <person name="Mooijman P."/>
            <person name="Klein Lankhorst R."/>
            <person name="Weitzenegger T."/>
            <person name="Bothe G."/>
            <person name="Rose M."/>
            <person name="Hauf J."/>
            <person name="Berneiser S."/>
            <person name="Hempel S."/>
            <person name="Feldpausch M."/>
            <person name="Lamberth S."/>
            <person name="Villarroel R."/>
            <person name="Gielen J."/>
            <person name="Ardiles W."/>
            <person name="Bents O."/>
            <person name="Lemcke K."/>
            <person name="Kolesov G."/>
            <person name="Mayer K.F.X."/>
            <person name="Rudd S."/>
            <person name="Schoof H."/>
            <person name="Schueller C."/>
            <person name="Zaccaria P."/>
            <person name="Mewes H.-W."/>
            <person name="Bevan M."/>
            <person name="Fransz P.F."/>
        </authorList>
    </citation>
    <scope>NUCLEOTIDE SEQUENCE [LARGE SCALE GENOMIC DNA]</scope>
    <source>
        <strain>cv. Columbia</strain>
    </source>
</reference>
<reference key="3">
    <citation type="journal article" date="2017" name="Plant J.">
        <title>Araport11: a complete reannotation of the Arabidopsis thaliana reference genome.</title>
        <authorList>
            <person name="Cheng C.Y."/>
            <person name="Krishnakumar V."/>
            <person name="Chan A.P."/>
            <person name="Thibaud-Nissen F."/>
            <person name="Schobel S."/>
            <person name="Town C.D."/>
        </authorList>
    </citation>
    <scope>GENOME REANNOTATION</scope>
    <source>
        <strain>cv. Columbia</strain>
    </source>
</reference>
<reference key="4">
    <citation type="journal article" date="2003" name="Science">
        <title>Empirical analysis of transcriptional activity in the Arabidopsis genome.</title>
        <authorList>
            <person name="Yamada K."/>
            <person name="Lim J."/>
            <person name="Dale J.M."/>
            <person name="Chen H."/>
            <person name="Shinn P."/>
            <person name="Palm C.J."/>
            <person name="Southwick A.M."/>
            <person name="Wu H.C."/>
            <person name="Kim C.J."/>
            <person name="Nguyen M."/>
            <person name="Pham P.K."/>
            <person name="Cheuk R.F."/>
            <person name="Karlin-Newmann G."/>
            <person name="Liu S.X."/>
            <person name="Lam B."/>
            <person name="Sakano H."/>
            <person name="Wu T."/>
            <person name="Yu G."/>
            <person name="Miranda M."/>
            <person name="Quach H.L."/>
            <person name="Tripp M."/>
            <person name="Chang C.H."/>
            <person name="Lee J.M."/>
            <person name="Toriumi M.J."/>
            <person name="Chan M.M."/>
            <person name="Tang C.C."/>
            <person name="Onodera C.S."/>
            <person name="Deng J.M."/>
            <person name="Akiyama K."/>
            <person name="Ansari Y."/>
            <person name="Arakawa T."/>
            <person name="Banh J."/>
            <person name="Banno F."/>
            <person name="Bowser L."/>
            <person name="Brooks S.Y."/>
            <person name="Carninci P."/>
            <person name="Chao Q."/>
            <person name="Choy N."/>
            <person name="Enju A."/>
            <person name="Goldsmith A.D."/>
            <person name="Gurjal M."/>
            <person name="Hansen N.F."/>
            <person name="Hayashizaki Y."/>
            <person name="Johnson-Hopson C."/>
            <person name="Hsuan V.W."/>
            <person name="Iida K."/>
            <person name="Karnes M."/>
            <person name="Khan S."/>
            <person name="Koesema E."/>
            <person name="Ishida J."/>
            <person name="Jiang P.X."/>
            <person name="Jones T."/>
            <person name="Kawai J."/>
            <person name="Kamiya A."/>
            <person name="Meyers C."/>
            <person name="Nakajima M."/>
            <person name="Narusaka M."/>
            <person name="Seki M."/>
            <person name="Sakurai T."/>
            <person name="Satou M."/>
            <person name="Tamse R."/>
            <person name="Vaysberg M."/>
            <person name="Wallender E.K."/>
            <person name="Wong C."/>
            <person name="Yamamura Y."/>
            <person name="Yuan S."/>
            <person name="Shinozaki K."/>
            <person name="Davis R.W."/>
            <person name="Theologis A."/>
            <person name="Ecker J.R."/>
        </authorList>
    </citation>
    <scope>NUCLEOTIDE SEQUENCE [LARGE SCALE MRNA]</scope>
    <source>
        <strain>cv. Columbia</strain>
    </source>
</reference>
<reference key="5">
    <citation type="journal article" date="2009" name="DNA Res.">
        <title>Analysis of multiple occurrences of alternative splicing events in Arabidopsis thaliana using novel sequenced full-length cDNAs.</title>
        <authorList>
            <person name="Iida K."/>
            <person name="Fukami-Kobayashi K."/>
            <person name="Toyoda A."/>
            <person name="Sakaki Y."/>
            <person name="Kobayashi M."/>
            <person name="Seki M."/>
            <person name="Shinozaki K."/>
        </authorList>
    </citation>
    <scope>NUCLEOTIDE SEQUENCE [LARGE SCALE MRNA]</scope>
    <source>
        <strain>cv. Columbia</strain>
        <tissue>Rosette leaf</tissue>
    </source>
</reference>
<reference key="6">
    <citation type="journal article" date="2003" name="Microbiol. Mol. Biol. Rev.">
        <title>Two families of mechanosensitive channel proteins.</title>
        <authorList>
            <person name="Pivetti C.D."/>
            <person name="Yen M.R."/>
            <person name="Miller S."/>
            <person name="Busch W."/>
            <person name="Tseng Y.H."/>
            <person name="Booth I.R."/>
            <person name="Saier M.H. Jr."/>
        </authorList>
    </citation>
    <scope>GENE FAMILY</scope>
</reference>
<reference key="7">
    <citation type="journal article" date="2003" name="Mol. Cell. Proteomics">
        <title>Large-scale analysis of in vivo phosphorylated membrane proteins by immobilized metal ion affinity chromatography and mass spectrometry.</title>
        <authorList>
            <person name="Nuehse T.S."/>
            <person name="Stensballe A."/>
            <person name="Jensen O.N."/>
            <person name="Peck S.C."/>
        </authorList>
    </citation>
    <scope>PHOSPHORYLATION [LARGE SCALE ANALYSIS] AT SER-128 AND SER-131</scope>
    <scope>IDENTIFICATION BY MASS SPECTROMETRY [LARGE SCALE ANALYSIS]</scope>
    <source>
        <strain>cv. La-0</strain>
    </source>
</reference>
<reference key="8">
    <citation type="journal article" date="2004" name="Plant Cell">
        <title>Phosphoproteomics of the Arabidopsis plasma membrane and a new phosphorylation site database.</title>
        <authorList>
            <person name="Nuehse T.S."/>
            <person name="Stensballe A."/>
            <person name="Jensen O.N."/>
            <person name="Peck S.C."/>
        </authorList>
    </citation>
    <scope>PHOSPHORYLATION [LARGE SCALE ANALYSIS] AT SER-128 AND SER-131</scope>
    <scope>IDENTIFICATION BY MASS SPECTROMETRY [LARGE SCALE ANALYSIS]</scope>
</reference>
<reference key="9">
    <citation type="book" date="2007" name="Mechanosensitive Ion Channels, Part A">
        <title>MscS-like proteins in plants.</title>
        <editorList>
            <person name="Hamill O.P."/>
        </editorList>
        <authorList>
            <person name="Haswell E.S."/>
        </authorList>
    </citation>
    <scope>REVIEW</scope>
    <scope>GENE FAMILY</scope>
    <scope>NOMENCLATURE</scope>
</reference>
<reference key="10">
    <citation type="journal article" date="2008" name="Curr. Biol.">
        <title>Two MscS homologs provide mechanosensitive channel activities in the Arabidopsis root.</title>
        <authorList>
            <person name="Haswell E.S."/>
            <person name="Peyronnet R."/>
            <person name="Barbier-Brygoo H."/>
            <person name="Meyerowitz E.M."/>
            <person name="Frachisse J.M."/>
        </authorList>
    </citation>
    <scope>FUNCTION</scope>
    <scope>TISSUE SPECIFICITY</scope>
    <scope>SUBCELLULAR LOCATION</scope>
</reference>
<reference key="11">
    <citation type="journal article" date="2008" name="Plant Signal. Behav.">
        <title>AtMSL9 and AtMSL10: Sensors of plasma membrane tension in Arabidopsis roots.</title>
        <authorList>
            <person name="Peyronnet R."/>
            <person name="Haswell E.S."/>
            <person name="Barbier-Brygoo H."/>
            <person name="Frachisse J.M."/>
        </authorList>
    </citation>
    <scope>FUNCTION</scope>
</reference>
<reference key="12">
    <citation type="journal article" date="2009" name="Plant Physiol.">
        <title>Large-scale Arabidopsis phosphoproteome profiling reveals novel chloroplast kinase substrates and phosphorylation networks.</title>
        <authorList>
            <person name="Reiland S."/>
            <person name="Messerli G."/>
            <person name="Baerenfaller K."/>
            <person name="Gerrits B."/>
            <person name="Endler A."/>
            <person name="Grossmann J."/>
            <person name="Gruissem W."/>
            <person name="Baginsky S."/>
        </authorList>
    </citation>
    <scope>PHOSPHORYLATION [LARGE SCALE ANALYSIS] AT SER-131</scope>
    <scope>IDENTIFICATION BY MASS SPECTROMETRY [LARGE SCALE ANALYSIS]</scope>
</reference>
<gene>
    <name type="primary">MSL10</name>
    <name type="ordered locus">At5g12080</name>
    <name type="ORF">F14F18.230</name>
    <name type="ORF">MXC9.3</name>
</gene>
<name>MSL10_ARATH</name>
<sequence length="734" mass="83032">MAEQKSSNGGGGGGDVVINVPVEEASRRSKEMASPESEKGVPFSKSPSPEISKLVGSPNKPPRAPNQNNVGLTQRKSFARSVYSKPKSRFVDPSCPVDTSILEEEVREQLGAGFSFSRASPNNKSNRSVGSPAPVTPSKVVVEKDEDEEIYKKVKLNREMRSKISTLALIESAFFVVILSALVASLTINVLKHHTFWGLEVWKWCVLVMVIFSGMLVTNWFMRLIVFLIETNFLLRRKVLYFVHGLKKSVQVFIWLCLILVAWILLFNHDVKRSPAATKVLKCITRTLISILTGAFFWLVKTLLLKILAANFNVNNFFDRIQDSVFHQYVLQTLSGLPLMEEAERVGREPSTGHLSFATVVKKGTVKEKKVIDMGKVHKMKREKVSAWTMRVLMEAVRTSGLSTISDTLDETAYGEGKEQADREITSEMEALAAAYHVFRNVAQPFFNYIEEEDLLRFMIKEEVDLVFPLFDGAAETGRITRKAFTEWVVKVYTSRRALAHSLNDTKTAVKQLNKLVTAILMVVTVVIWLLLLEVATTKVLLFFSTQLVALAFIIGSTCKNLFESIVFVFVMHPYDVGDRCVVDGVAMLVEEMNLLTTVFLKLNNEKVYYPNAVLATKPISNYFRSPNMGETVEFSISFSTPVSKIAHLKERIAEYLEQNPQHWAPVHSVVVKEIENMNKLKMALYSDHTITFQENRERNLRRTELSLAIKRMLEDLHIDYTLLPQDINLTKKN</sequence>
<feature type="chain" id="PRO_0000311999" description="Mechanosensitive ion channel protein 10">
    <location>
        <begin position="1"/>
        <end position="734"/>
    </location>
</feature>
<feature type="transmembrane region" description="Helical" evidence="2">
    <location>
        <begin position="164"/>
        <end position="184"/>
    </location>
</feature>
<feature type="transmembrane region" description="Helical" evidence="2">
    <location>
        <begin position="196"/>
        <end position="216"/>
    </location>
</feature>
<feature type="transmembrane region" description="Helical" evidence="2">
    <location>
        <begin position="249"/>
        <end position="269"/>
    </location>
</feature>
<feature type="transmembrane region" description="Helical" evidence="2">
    <location>
        <begin position="288"/>
        <end position="308"/>
    </location>
</feature>
<feature type="transmembrane region" description="Helical" evidence="2">
    <location>
        <begin position="516"/>
        <end position="536"/>
    </location>
</feature>
<feature type="transmembrane region" description="Helical" evidence="2">
    <location>
        <begin position="551"/>
        <end position="571"/>
    </location>
</feature>
<feature type="region of interest" description="Disordered" evidence="3">
    <location>
        <begin position="1"/>
        <end position="75"/>
    </location>
</feature>
<feature type="region of interest" description="Disordered" evidence="3">
    <location>
        <begin position="115"/>
        <end position="136"/>
    </location>
</feature>
<feature type="compositionally biased region" description="Basic and acidic residues" evidence="3">
    <location>
        <begin position="24"/>
        <end position="39"/>
    </location>
</feature>
<feature type="compositionally biased region" description="Polar residues" evidence="3">
    <location>
        <begin position="65"/>
        <end position="75"/>
    </location>
</feature>
<feature type="compositionally biased region" description="Polar residues" evidence="3">
    <location>
        <begin position="117"/>
        <end position="129"/>
    </location>
</feature>
<feature type="modified residue" description="Phosphoserine" evidence="1">
    <location>
        <position position="34"/>
    </location>
</feature>
<feature type="modified residue" description="Phosphoserine" evidence="7 8">
    <location>
        <position position="128"/>
    </location>
</feature>
<feature type="modified residue" description="Phosphoserine" evidence="7 8 9">
    <location>
        <position position="131"/>
    </location>
</feature>
<feature type="helix" evidence="10">
    <location>
        <begin position="167"/>
        <end position="187"/>
    </location>
</feature>
<feature type="helix" evidence="10">
    <location>
        <begin position="189"/>
        <end position="192"/>
    </location>
</feature>
<feature type="helix" evidence="10">
    <location>
        <begin position="201"/>
        <end position="231"/>
    </location>
</feature>
<feature type="helix" evidence="10">
    <location>
        <begin position="237"/>
        <end position="266"/>
    </location>
</feature>
<feature type="helix" evidence="10">
    <location>
        <begin position="275"/>
        <end position="333"/>
    </location>
</feature>
<feature type="helix" evidence="10">
    <location>
        <begin position="388"/>
        <end position="395"/>
    </location>
</feature>
<feature type="helix" evidence="10">
    <location>
        <begin position="433"/>
        <end position="442"/>
    </location>
</feature>
<feature type="helix" evidence="10">
    <location>
        <begin position="452"/>
        <end position="458"/>
    </location>
</feature>
<feature type="helix" evidence="10">
    <location>
        <begin position="461"/>
        <end position="467"/>
    </location>
</feature>
<feature type="helix" evidence="10">
    <location>
        <begin position="482"/>
        <end position="532"/>
    </location>
</feature>
<feature type="helix" evidence="10">
    <location>
        <begin position="538"/>
        <end position="554"/>
    </location>
</feature>
<feature type="helix" evidence="10">
    <location>
        <begin position="556"/>
        <end position="570"/>
    </location>
</feature>
<feature type="strand" evidence="10">
    <location>
        <begin position="580"/>
        <end position="583"/>
    </location>
</feature>
<feature type="strand" evidence="10">
    <location>
        <begin position="586"/>
        <end position="593"/>
    </location>
</feature>
<feature type="strand" evidence="10">
    <location>
        <begin position="595"/>
        <end position="601"/>
    </location>
</feature>
<feature type="strand" evidence="10">
    <location>
        <begin position="607"/>
        <end position="611"/>
    </location>
</feature>
<feature type="helix" evidence="10">
    <location>
        <begin position="612"/>
        <end position="615"/>
    </location>
</feature>
<feature type="strand" evidence="10">
    <location>
        <begin position="620"/>
        <end position="622"/>
    </location>
</feature>
<feature type="turn" evidence="10">
    <location>
        <begin position="623"/>
        <end position="625"/>
    </location>
</feature>
<feature type="strand" evidence="10">
    <location>
        <begin position="630"/>
        <end position="638"/>
    </location>
</feature>
<feature type="helix" evidence="10">
    <location>
        <begin position="643"/>
        <end position="658"/>
    </location>
</feature>
<feature type="turn" evidence="10">
    <location>
        <begin position="661"/>
        <end position="663"/>
    </location>
</feature>
<feature type="strand" evidence="10">
    <location>
        <begin position="664"/>
        <end position="676"/>
    </location>
</feature>
<feature type="turn" evidence="10">
    <location>
        <begin position="677"/>
        <end position="679"/>
    </location>
</feature>
<feature type="strand" evidence="10">
    <location>
        <begin position="680"/>
        <end position="691"/>
    </location>
</feature>
<feature type="helix" evidence="10">
    <location>
        <begin position="696"/>
        <end position="717"/>
    </location>
</feature>
<feature type="strand" evidence="10">
    <location>
        <begin position="726"/>
        <end position="730"/>
    </location>
</feature>
<keyword id="KW-0002">3D-structure</keyword>
<keyword id="KW-1003">Cell membrane</keyword>
<keyword id="KW-0407">Ion channel</keyword>
<keyword id="KW-0406">Ion transport</keyword>
<keyword id="KW-0472">Membrane</keyword>
<keyword id="KW-0597">Phosphoprotein</keyword>
<keyword id="KW-1185">Reference proteome</keyword>
<keyword id="KW-0812">Transmembrane</keyword>
<keyword id="KW-1133">Transmembrane helix</keyword>
<keyword id="KW-0813">Transport</keyword>
<protein>
    <recommendedName>
        <fullName>Mechanosensitive ion channel protein 10</fullName>
    </recommendedName>
    <alternativeName>
        <fullName>Mechanosensitive channel of small conductance-like 10</fullName>
    </alternativeName>
    <alternativeName>
        <fullName>MscS-Like protein 10</fullName>
        <shortName>AtMSL10</shortName>
    </alternativeName>
</protein>